<organism>
    <name type="scientific">Mus musculus</name>
    <name type="common">Mouse</name>
    <dbReference type="NCBI Taxonomy" id="10090"/>
    <lineage>
        <taxon>Eukaryota</taxon>
        <taxon>Metazoa</taxon>
        <taxon>Chordata</taxon>
        <taxon>Craniata</taxon>
        <taxon>Vertebrata</taxon>
        <taxon>Euteleostomi</taxon>
        <taxon>Mammalia</taxon>
        <taxon>Eutheria</taxon>
        <taxon>Euarchontoglires</taxon>
        <taxon>Glires</taxon>
        <taxon>Rodentia</taxon>
        <taxon>Myomorpha</taxon>
        <taxon>Muroidea</taxon>
        <taxon>Muridae</taxon>
        <taxon>Murinae</taxon>
        <taxon>Mus</taxon>
        <taxon>Mus</taxon>
    </lineage>
</organism>
<protein>
    <recommendedName>
        <fullName evidence="16">Prolyl hydroxylase EGLN3</fullName>
        <ecNumber evidence="17">1.14.11.-</ecNumber>
    </recommendedName>
    <alternativeName>
        <fullName>Egl nine homolog 3</fullName>
        <ecNumber evidence="4">1.14.11.29</ecNumber>
    </alternativeName>
    <alternativeName>
        <fullName>Hypoxia-inducible factor prolyl hydroxylase 3</fullName>
        <shortName>HIF-PH3</shortName>
        <shortName>HIF-prolyl hydroxylase 3</shortName>
        <shortName>HPH-3</shortName>
    </alternativeName>
    <alternativeName>
        <fullName evidence="14">Prolyl hydroxylase domain-containing protein 3</fullName>
        <shortName evidence="14">PHD3</shortName>
    </alternativeName>
    <alternativeName>
        <fullName evidence="13">SM-20</fullName>
    </alternativeName>
</protein>
<accession>Q91UZ4</accession>
<accession>Q3TCG8</accession>
<accession>Q8C8M6</accession>
<accession>Q8CCA8</accession>
<accession>Q8R5C7</accession>
<comment type="function">
    <text evidence="4 11 12">Prolyl hydroxylase that mediates hydroxylation of proline residues in target proteins, such as PKM, TELO2, ATF4 and HIF1A (PubMed:24809345). Target proteins are preferentially recognized via a LXXLAP motif (By similarity). Cellular oxygen sensor that catalyzes, under normoxic conditions, the post-translational formation of 4-hydroxyproline in hypoxia-inducible factor (HIF) alpha proteins (By similarity). Hydroxylates a specific proline found in each of the oxygen-dependent degradation (ODD) domains (N-terminal, NODD, and C-terminal, CODD) of HIF1A (By similarity). Also hydroxylates HIF2A (By similarity). Has a preference for the CODD site for both HIF1A and HIF2A (By similarity). Hydroxylation on the NODD site by EGLN3 appears to require prior hydroxylation on the CODD site (By similarity). Hydroxylated HIFs are then targeted for proteasomal degradation via the von Hippel-Lindau ubiquitination complex (By similarity). Under hypoxic conditions, the hydroxylation reaction is attenuated allowing HIFs to escape degradation resulting in their translocation to the nucleus, heterodimerization with HIF1B, and increased expression of hypoxy-inducible genes (By similarity). ELGN3 is the most important isozyme in limiting physiological activation of HIFs (particularly HIF2A) in hypoxia (By similarity). Also hydroxylates PKM in hypoxia, limiting glycolysis (By similarity). Under normoxia, hydroxylates and regulates the stability of ADRB2. Regulator of cardiomyocyte and neuronal apoptosis (By similarity). In cardiomyocytes, inhibits the anti-apoptotic effect of BCL2 by disrupting the BAX-BCL2 complex (By similarity). In neurons, has a NGF-induced proapoptotic effect, probably through regulating CASP3 activity (By similarity). Also essential for hypoxic regulation of neutrophilic inflammation (PubMed:21317538). Plays a crucial role in DNA damage response (DDR) by hydroxylating TELO2, promoting its interaction with ATR which is required for activation of the ATR/CHK1/p53 pathway (By similarity). Also mediates hydroxylation of ATF4, leading to decreased protein stability of ATF4 (PubMed:24809345).</text>
</comment>
<comment type="catalytic activity">
    <reaction evidence="17">
        <text>L-prolyl-[protein] + 2-oxoglutarate + O2 = trans-4-hydroxy-L-prolyl-[protein] + succinate + CO2</text>
        <dbReference type="Rhea" id="RHEA:63484"/>
        <dbReference type="Rhea" id="RHEA-COMP:12408"/>
        <dbReference type="Rhea" id="RHEA-COMP:16354"/>
        <dbReference type="ChEBI" id="CHEBI:15379"/>
        <dbReference type="ChEBI" id="CHEBI:16526"/>
        <dbReference type="ChEBI" id="CHEBI:16810"/>
        <dbReference type="ChEBI" id="CHEBI:30031"/>
        <dbReference type="ChEBI" id="CHEBI:50342"/>
        <dbReference type="ChEBI" id="CHEBI:61965"/>
    </reaction>
    <physiologicalReaction direction="left-to-right" evidence="17">
        <dbReference type="Rhea" id="RHEA:63485"/>
    </physiologicalReaction>
</comment>
<comment type="catalytic activity">
    <reaction evidence="4">
        <text>L-prolyl-[hypoxia-inducible factor alpha subunit] + 2-oxoglutarate + O2 = trans-4-hydroxy-L-prolyl-[hypoxia-inducible factor alpha subunit] + succinate + CO2</text>
        <dbReference type="Rhea" id="RHEA:48400"/>
        <dbReference type="Rhea" id="RHEA-COMP:12093"/>
        <dbReference type="Rhea" id="RHEA-COMP:12094"/>
        <dbReference type="ChEBI" id="CHEBI:15379"/>
        <dbReference type="ChEBI" id="CHEBI:16526"/>
        <dbReference type="ChEBI" id="CHEBI:16810"/>
        <dbReference type="ChEBI" id="CHEBI:30031"/>
        <dbReference type="ChEBI" id="CHEBI:50342"/>
        <dbReference type="ChEBI" id="CHEBI:61965"/>
        <dbReference type="EC" id="1.14.11.29"/>
    </reaction>
</comment>
<comment type="cofactor">
    <cofactor evidence="5">
        <name>Fe(2+)</name>
        <dbReference type="ChEBI" id="CHEBI:29033"/>
    </cofactor>
    <text evidence="5">Binds 1 Fe(2+) ion per subunit.</text>
</comment>
<comment type="cofactor">
    <cofactor evidence="2">
        <name>L-ascorbate</name>
        <dbReference type="ChEBI" id="CHEBI:38290"/>
    </cofactor>
</comment>
<comment type="subunit">
    <text evidence="1 4">Interacts with ADRB2; the interaction hydroxylates ADRB2 facilitating its ubiquitination by the VHL-E3 ligase complex (By similarity). Interacts with PKM; the interaction hydroxylates PKM in hypoxia (By similarity). Interacts with WDR83; the interaction leads to almost complete elimination of HIF-mediated reporter activity (By similarity). Interacts with BCL2 (via its BH4 domain); the interaction disrupts the BAX-BCL4 complex inhibiting the anti-apoptotic activity of BCL2 (By similarity). Interacts with LIMD1, WTIP and AJUBA (By similarity).</text>
</comment>
<comment type="subcellular location">
    <subcellularLocation>
        <location evidence="4">Nucleus</location>
    </subcellularLocation>
    <subcellularLocation>
        <location evidence="4">Cytoplasm</location>
    </subcellularLocation>
    <text evidence="1">Colocalizes with WDR83 in the cytoplasm.</text>
</comment>
<comment type="tissue specificity">
    <text evidence="7">Highly expressed in cardiac and smooth muscle. Also high expression in brain, skeletal muscle and kidney. Low levels in lung.</text>
</comment>
<comment type="developmental stage">
    <text evidence="6">Detected at 8.5 dpc in proliferating myoblasts of the dermomyotome and the developing heart tube. From dermomyotomal cells of the rostral somites expression progressed in a rostral to caudal pattern, with highest levels seen in the muscle primordia and mature muscles.</text>
</comment>
<comment type="induction">
    <text evidence="11">Induced by hypoxia. Up-regulated in proliferating myoblasts induced to form differentiated myotubes.</text>
</comment>
<comment type="domain">
    <text evidence="3">The Beta(2)beta(3) 'finger-like' loop domain is important for substrate (HIFs' CODD/NODD) selectivity.</text>
</comment>
<comment type="PTM">
    <text evidence="12">Ubiquitinated by SIAH1 and/or SIAH2 in response to the unfolded protein response (UPR), leading to its degradation.</text>
</comment>
<comment type="disruption phenotype">
    <text evidence="8 9 10">Null mice exhibit reduced apoptosis of in sympathetic neurons. However, the sympathoadrenal system appears hypofunctional with reduced target tissue innervation, adrenal medullary secretory capacity, sympathoadrenal responses, and systemic blood pressure. There is an increase in ADRB2 abundance and decrease of ADRB1 abundance in heart.</text>
</comment>
<comment type="sequence caution" evidence="16">
    <conflict type="erroneous initiation">
        <sequence resource="EMBL-CDS" id="AAH22961"/>
    </conflict>
</comment>
<feature type="chain" id="PRO_0000206667" description="Prolyl hydroxylase EGLN3">
    <location>
        <begin position="1"/>
        <end position="239"/>
    </location>
</feature>
<feature type="domain" description="Fe2OG dioxygenase" evidence="5">
    <location>
        <begin position="116"/>
        <end position="214"/>
    </location>
</feature>
<feature type="region of interest" description="Beta(2)beta(3) 'finger-like' loop" evidence="3">
    <location>
        <begin position="62"/>
        <end position="73"/>
    </location>
</feature>
<feature type="region of interest" description="Required for interaction with ADRB2" evidence="4">
    <location>
        <begin position="88"/>
        <end position="104"/>
    </location>
</feature>
<feature type="binding site" evidence="5">
    <location>
        <position position="135"/>
    </location>
    <ligand>
        <name>Fe cation</name>
        <dbReference type="ChEBI" id="CHEBI:24875"/>
    </ligand>
</feature>
<feature type="binding site" evidence="5">
    <location>
        <position position="137"/>
    </location>
    <ligand>
        <name>Fe cation</name>
        <dbReference type="ChEBI" id="CHEBI:24875"/>
    </ligand>
</feature>
<feature type="binding site" evidence="5">
    <location>
        <position position="196"/>
    </location>
    <ligand>
        <name>Fe cation</name>
        <dbReference type="ChEBI" id="CHEBI:24875"/>
    </ligand>
</feature>
<feature type="binding site" evidence="5">
    <location>
        <position position="205"/>
    </location>
    <ligand>
        <name>2-oxoglutarate</name>
        <dbReference type="ChEBI" id="CHEBI:16810"/>
    </ligand>
</feature>
<feature type="sequence conflict" description="In Ref. 3; BAC32092/BAE38492/BAE41988." evidence="16" ref="3">
    <original>R</original>
    <variation>C</variation>
    <location>
        <position position="65"/>
    </location>
</feature>
<reference key="1">
    <citation type="journal article" date="1999" name="Gene Expr.">
        <title>SM-20 is a novel growth factor-responsive gene regulated during skeletal muscle development and differentiation.</title>
        <authorList>
            <person name="Moschella M.C."/>
            <person name="Menzies K."/>
            <person name="Tsao L."/>
            <person name="Lieb M.A."/>
            <person name="Kohtz J.D."/>
            <person name="Kohtz D.S."/>
            <person name="Taubman M.B."/>
        </authorList>
    </citation>
    <scope>NUCLEOTIDE SEQUENCE [MRNA]</scope>
    <scope>DEVELOPMENTAL STAGE</scope>
    <source>
        <tissue>Embryo</tissue>
    </source>
</reference>
<reference key="2">
    <citation type="journal article" date="2001" name="Gene">
        <title>Characterization and comparative analysis of the EGLN gene family.</title>
        <authorList>
            <person name="Taylor M.S."/>
        </authorList>
    </citation>
    <scope>NUCLEOTIDE SEQUENCE [MRNA]</scope>
</reference>
<reference key="3">
    <citation type="journal article" date="2005" name="Science">
        <title>The transcriptional landscape of the mammalian genome.</title>
        <authorList>
            <person name="Carninci P."/>
            <person name="Kasukawa T."/>
            <person name="Katayama S."/>
            <person name="Gough J."/>
            <person name="Frith M.C."/>
            <person name="Maeda N."/>
            <person name="Oyama R."/>
            <person name="Ravasi T."/>
            <person name="Lenhard B."/>
            <person name="Wells C."/>
            <person name="Kodzius R."/>
            <person name="Shimokawa K."/>
            <person name="Bajic V.B."/>
            <person name="Brenner S.E."/>
            <person name="Batalov S."/>
            <person name="Forrest A.R."/>
            <person name="Zavolan M."/>
            <person name="Davis M.J."/>
            <person name="Wilming L.G."/>
            <person name="Aidinis V."/>
            <person name="Allen J.E."/>
            <person name="Ambesi-Impiombato A."/>
            <person name="Apweiler R."/>
            <person name="Aturaliya R.N."/>
            <person name="Bailey T.L."/>
            <person name="Bansal M."/>
            <person name="Baxter L."/>
            <person name="Beisel K.W."/>
            <person name="Bersano T."/>
            <person name="Bono H."/>
            <person name="Chalk A.M."/>
            <person name="Chiu K.P."/>
            <person name="Choudhary V."/>
            <person name="Christoffels A."/>
            <person name="Clutterbuck D.R."/>
            <person name="Crowe M.L."/>
            <person name="Dalla E."/>
            <person name="Dalrymple B.P."/>
            <person name="de Bono B."/>
            <person name="Della Gatta G."/>
            <person name="di Bernardo D."/>
            <person name="Down T."/>
            <person name="Engstrom P."/>
            <person name="Fagiolini M."/>
            <person name="Faulkner G."/>
            <person name="Fletcher C.F."/>
            <person name="Fukushima T."/>
            <person name="Furuno M."/>
            <person name="Futaki S."/>
            <person name="Gariboldi M."/>
            <person name="Georgii-Hemming P."/>
            <person name="Gingeras T.R."/>
            <person name="Gojobori T."/>
            <person name="Green R.E."/>
            <person name="Gustincich S."/>
            <person name="Harbers M."/>
            <person name="Hayashi Y."/>
            <person name="Hensch T.K."/>
            <person name="Hirokawa N."/>
            <person name="Hill D."/>
            <person name="Huminiecki L."/>
            <person name="Iacono M."/>
            <person name="Ikeo K."/>
            <person name="Iwama A."/>
            <person name="Ishikawa T."/>
            <person name="Jakt M."/>
            <person name="Kanapin A."/>
            <person name="Katoh M."/>
            <person name="Kawasawa Y."/>
            <person name="Kelso J."/>
            <person name="Kitamura H."/>
            <person name="Kitano H."/>
            <person name="Kollias G."/>
            <person name="Krishnan S.P."/>
            <person name="Kruger A."/>
            <person name="Kummerfeld S.K."/>
            <person name="Kurochkin I.V."/>
            <person name="Lareau L.F."/>
            <person name="Lazarevic D."/>
            <person name="Lipovich L."/>
            <person name="Liu J."/>
            <person name="Liuni S."/>
            <person name="McWilliam S."/>
            <person name="Madan Babu M."/>
            <person name="Madera M."/>
            <person name="Marchionni L."/>
            <person name="Matsuda H."/>
            <person name="Matsuzawa S."/>
            <person name="Miki H."/>
            <person name="Mignone F."/>
            <person name="Miyake S."/>
            <person name="Morris K."/>
            <person name="Mottagui-Tabar S."/>
            <person name="Mulder N."/>
            <person name="Nakano N."/>
            <person name="Nakauchi H."/>
            <person name="Ng P."/>
            <person name="Nilsson R."/>
            <person name="Nishiguchi S."/>
            <person name="Nishikawa S."/>
            <person name="Nori F."/>
            <person name="Ohara O."/>
            <person name="Okazaki Y."/>
            <person name="Orlando V."/>
            <person name="Pang K.C."/>
            <person name="Pavan W.J."/>
            <person name="Pavesi G."/>
            <person name="Pesole G."/>
            <person name="Petrovsky N."/>
            <person name="Piazza S."/>
            <person name="Reed J."/>
            <person name="Reid J.F."/>
            <person name="Ring B.Z."/>
            <person name="Ringwald M."/>
            <person name="Rost B."/>
            <person name="Ruan Y."/>
            <person name="Salzberg S.L."/>
            <person name="Sandelin A."/>
            <person name="Schneider C."/>
            <person name="Schoenbach C."/>
            <person name="Sekiguchi K."/>
            <person name="Semple C.A."/>
            <person name="Seno S."/>
            <person name="Sessa L."/>
            <person name="Sheng Y."/>
            <person name="Shibata Y."/>
            <person name="Shimada H."/>
            <person name="Shimada K."/>
            <person name="Silva D."/>
            <person name="Sinclair B."/>
            <person name="Sperling S."/>
            <person name="Stupka E."/>
            <person name="Sugiura K."/>
            <person name="Sultana R."/>
            <person name="Takenaka Y."/>
            <person name="Taki K."/>
            <person name="Tammoja K."/>
            <person name="Tan S.L."/>
            <person name="Tang S."/>
            <person name="Taylor M.S."/>
            <person name="Tegner J."/>
            <person name="Teichmann S.A."/>
            <person name="Ueda H.R."/>
            <person name="van Nimwegen E."/>
            <person name="Verardo R."/>
            <person name="Wei C.L."/>
            <person name="Yagi K."/>
            <person name="Yamanishi H."/>
            <person name="Zabarovsky E."/>
            <person name="Zhu S."/>
            <person name="Zimmer A."/>
            <person name="Hide W."/>
            <person name="Bult C."/>
            <person name="Grimmond S.M."/>
            <person name="Teasdale R.D."/>
            <person name="Liu E.T."/>
            <person name="Brusic V."/>
            <person name="Quackenbush J."/>
            <person name="Wahlestedt C."/>
            <person name="Mattick J.S."/>
            <person name="Hume D.A."/>
            <person name="Kai C."/>
            <person name="Sasaki D."/>
            <person name="Tomaru Y."/>
            <person name="Fukuda S."/>
            <person name="Kanamori-Katayama M."/>
            <person name="Suzuki M."/>
            <person name="Aoki J."/>
            <person name="Arakawa T."/>
            <person name="Iida J."/>
            <person name="Imamura K."/>
            <person name="Itoh M."/>
            <person name="Kato T."/>
            <person name="Kawaji H."/>
            <person name="Kawagashira N."/>
            <person name="Kawashima T."/>
            <person name="Kojima M."/>
            <person name="Kondo S."/>
            <person name="Konno H."/>
            <person name="Nakano K."/>
            <person name="Ninomiya N."/>
            <person name="Nishio T."/>
            <person name="Okada M."/>
            <person name="Plessy C."/>
            <person name="Shibata K."/>
            <person name="Shiraki T."/>
            <person name="Suzuki S."/>
            <person name="Tagami M."/>
            <person name="Waki K."/>
            <person name="Watahiki A."/>
            <person name="Okamura-Oho Y."/>
            <person name="Suzuki H."/>
            <person name="Kawai J."/>
            <person name="Hayashizaki Y."/>
        </authorList>
    </citation>
    <scope>NUCLEOTIDE SEQUENCE [LARGE SCALE MRNA]</scope>
    <source>
        <strain>C57BL/6J</strain>
        <strain>NOD</strain>
        <tissue>Dendritic cell</tissue>
        <tissue>Lung</tissue>
        <tissue>Retina</tissue>
    </source>
</reference>
<reference key="4">
    <citation type="journal article" date="2004" name="Genome Res.">
        <title>The status, quality, and expansion of the NIH full-length cDNA project: the Mammalian Gene Collection (MGC).</title>
        <authorList>
            <consortium name="The MGC Project Team"/>
        </authorList>
    </citation>
    <scope>NUCLEOTIDE SEQUENCE [LARGE SCALE MRNA]</scope>
    <source>
        <strain>FVB/N-3</strain>
        <strain>NMRI</strain>
        <tissue>Mammary gland</tissue>
    </source>
</reference>
<reference key="5">
    <citation type="journal article" date="2002" name="Biochem. Cell Biol.">
        <title>Mammalian EGLN genes have distinct patterns of mRNA expression and regulation.</title>
        <authorList>
            <person name="Lieb M.E."/>
            <person name="Menzies K."/>
            <person name="Moschella M.C."/>
            <person name="Ni R."/>
            <person name="Taubman M.B."/>
        </authorList>
    </citation>
    <scope>TISSUE SPECIFICITY</scope>
</reference>
<reference key="6">
    <citation type="journal article" date="2008" name="Mol. Cell. Biol.">
        <title>Abnormal sympathoadrenal development and systemic hypotension in PHD3-/-mice.</title>
        <authorList>
            <person name="Bishop T."/>
            <person name="Gallagher D."/>
            <person name="Pascual A."/>
            <person name="Lygate C.A."/>
            <person name="de Bono J.P."/>
            <person name="Nicholls L.G."/>
            <person name="Ortega-Saenz P."/>
            <person name="Oster H."/>
            <person name="Wijeyekoon B."/>
            <person name="Sutherland A.I."/>
            <person name="Grosfeld A."/>
            <person name="Aragones J."/>
            <person name="Schneider M."/>
            <person name="van Geyte K."/>
            <person name="Teixeira D."/>
            <person name="Diez-Juan A."/>
            <person name="Lopez-Barneo J."/>
            <person name="Channon K.M."/>
            <person name="Maxwell P.H."/>
            <person name="Pugh C.W."/>
            <person name="Davies A.M."/>
            <person name="Carmeliet P."/>
            <person name="Ratcliffe P.J."/>
        </authorList>
    </citation>
    <scope>DISRUPTION PHENOTYPE</scope>
</reference>
<reference key="7">
    <citation type="journal article" date="2009" name="Mol. Cell. Biol.">
        <title>A feedback loop involving the Phd3 prolyl hydroxylase tunes the mammalian hypoxic response in vivo.</title>
        <authorList>
            <person name="Minamishima Y.A."/>
            <person name="Moslehi J."/>
            <person name="Padera R.F."/>
            <person name="Bronson R.T."/>
            <person name="Liao R."/>
            <person name="Kaelin W.G. Jr."/>
        </authorList>
    </citation>
    <scope>DISRUPTION PHENOTYPE</scope>
</reference>
<reference key="8">
    <citation type="journal article" date="2009" name="Sci. Signal.">
        <title>Oxygen-regulated beta(2)-adrenergic receptor hydroxylation by EGLN3 and ubiquitylation by pVHL.</title>
        <authorList>
            <person name="Xie L."/>
            <person name="Xiao K."/>
            <person name="Whalen E.J."/>
            <person name="Forrester M.T."/>
            <person name="Freeman R.S."/>
            <person name="Fong G."/>
            <person name="Gygi S.P."/>
            <person name="Lefkowitz R.J."/>
            <person name="Stamler J.S."/>
        </authorList>
    </citation>
    <scope>DISRUPTION PHENOTYPE</scope>
</reference>
<reference key="9">
    <citation type="journal article" date="2011" name="J. Clin. Invest.">
        <title>Prolyl hydroxylase 3 (PHD3) is essential for hypoxic regulation of neutrophilic inflammation in humans and mice.</title>
        <authorList>
            <person name="Walmsley S.R."/>
            <person name="Chilvers E.R."/>
            <person name="Thompson A.A."/>
            <person name="Vaughan K."/>
            <person name="Marriott H.M."/>
            <person name="Parker L.C."/>
            <person name="Shaw G."/>
            <person name="Parmar S."/>
            <person name="Schneider M."/>
            <person name="Sabroe I."/>
            <person name="Dockrell D.H."/>
            <person name="Milo M."/>
            <person name="Taylor C.T."/>
            <person name="Johnson R.S."/>
            <person name="Pugh C.W."/>
            <person name="Ratcliffe P.J."/>
            <person name="Maxwell P.H."/>
            <person name="Carmeliet P."/>
            <person name="Whyte M.K."/>
        </authorList>
    </citation>
    <scope>FUNCTION</scope>
    <scope>INDUCTION</scope>
</reference>
<reference key="10">
    <citation type="journal article" date="2014" name="PLoS Genet.">
        <title>Fine tuning of the UPR by the ubiquitin ligases Siah1/2.</title>
        <authorList>
            <person name="Scortegagna M."/>
            <person name="Kim H."/>
            <person name="Li J.L."/>
            <person name="Yao H."/>
            <person name="Brill L.M."/>
            <person name="Han J."/>
            <person name="Lau E."/>
            <person name="Bowtell D."/>
            <person name="Haddad G."/>
            <person name="Kaufman R.J."/>
            <person name="Ronai Z.A."/>
        </authorList>
    </citation>
    <scope>FUNCTION</scope>
    <scope>CATALYTIC ACTIVITY</scope>
    <scope>UBIQUITINATION</scope>
</reference>
<sequence>MPLGHIMRLDLEKIALEYIVPCLHEVGFCYLDNFLGEVVGDCVLERVKQLHYNGALRDGQLAGPRAGVSKRHLRGDQITWIGGNEEGCEAINFLLSLIDRLVLYCGSRLGKYYVKERSKAMVACYPGNGTGYVRHVDNPNGDGRCITCIYYLNKNWDAKLHGGVLRIFPEGKSFVADVEPIFDRLLFFWSDRRNPHEVQPSYATRYAMTVWYFDAEERAEAKKKFRNLTRKTESALAKD</sequence>
<keyword id="KW-0053">Apoptosis</keyword>
<keyword id="KW-0963">Cytoplasm</keyword>
<keyword id="KW-0223">Dioxygenase</keyword>
<keyword id="KW-0227">DNA damage</keyword>
<keyword id="KW-0408">Iron</keyword>
<keyword id="KW-0479">Metal-binding</keyword>
<keyword id="KW-0539">Nucleus</keyword>
<keyword id="KW-0560">Oxidoreductase</keyword>
<keyword id="KW-1185">Reference proteome</keyword>
<keyword id="KW-0832">Ubl conjugation</keyword>
<keyword id="KW-0847">Vitamin C</keyword>
<evidence type="ECO:0000250" key="1">
    <source>
        <dbReference type="UniProtKB" id="Q62630"/>
    </source>
</evidence>
<evidence type="ECO:0000250" key="2">
    <source>
        <dbReference type="UniProtKB" id="Q96KS0"/>
    </source>
</evidence>
<evidence type="ECO:0000250" key="3">
    <source>
        <dbReference type="UniProtKB" id="Q9GZT9"/>
    </source>
</evidence>
<evidence type="ECO:0000250" key="4">
    <source>
        <dbReference type="UniProtKB" id="Q9H6Z9"/>
    </source>
</evidence>
<evidence type="ECO:0000255" key="5">
    <source>
        <dbReference type="PROSITE-ProRule" id="PRU00805"/>
    </source>
</evidence>
<evidence type="ECO:0000269" key="6">
    <source>
    </source>
</evidence>
<evidence type="ECO:0000269" key="7">
    <source>
    </source>
</evidence>
<evidence type="ECO:0000269" key="8">
    <source>
    </source>
</evidence>
<evidence type="ECO:0000269" key="9">
    <source>
    </source>
</evidence>
<evidence type="ECO:0000269" key="10">
    <source>
    </source>
</evidence>
<evidence type="ECO:0000269" key="11">
    <source>
    </source>
</evidence>
<evidence type="ECO:0000269" key="12">
    <source>
    </source>
</evidence>
<evidence type="ECO:0000303" key="13">
    <source>
    </source>
</evidence>
<evidence type="ECO:0000303" key="14">
    <source>
    </source>
</evidence>
<evidence type="ECO:0000303" key="15">
    <source>
    </source>
</evidence>
<evidence type="ECO:0000305" key="16"/>
<evidence type="ECO:0000305" key="17">
    <source>
    </source>
</evidence>
<evidence type="ECO:0000312" key="18">
    <source>
        <dbReference type="MGI" id="MGI:1932288"/>
    </source>
</evidence>
<gene>
    <name evidence="15 18" type="primary">Egln3</name>
</gene>
<dbReference type="EC" id="1.14.11.-" evidence="17"/>
<dbReference type="EC" id="1.14.11.29" evidence="4"/>
<dbReference type="EMBL" id="AF421882">
    <property type="protein sequence ID" value="AAL17824.1"/>
    <property type="molecule type" value="mRNA"/>
</dbReference>
<dbReference type="EMBL" id="AJ310548">
    <property type="protein sequence ID" value="CAC42517.1"/>
    <property type="molecule type" value="mRNA"/>
</dbReference>
<dbReference type="EMBL" id="AK044787">
    <property type="protein sequence ID" value="BAC32092.1"/>
    <property type="molecule type" value="mRNA"/>
</dbReference>
<dbReference type="EMBL" id="AK165972">
    <property type="protein sequence ID" value="BAE38492.1"/>
    <property type="molecule type" value="mRNA"/>
</dbReference>
<dbReference type="EMBL" id="AK170732">
    <property type="protein sequence ID" value="BAE41988.1"/>
    <property type="molecule type" value="mRNA"/>
</dbReference>
<dbReference type="EMBL" id="BC022961">
    <property type="protein sequence ID" value="AAH22961.1"/>
    <property type="status" value="ALT_INIT"/>
    <property type="molecule type" value="mRNA"/>
</dbReference>
<dbReference type="EMBL" id="BC044926">
    <property type="protein sequence ID" value="AAH44926.1"/>
    <property type="molecule type" value="mRNA"/>
</dbReference>
<dbReference type="EMBL" id="BC058278">
    <property type="protein sequence ID" value="AAH58278.1"/>
    <property type="molecule type" value="mRNA"/>
</dbReference>
<dbReference type="EMBL" id="BC069893">
    <property type="protein sequence ID" value="AAH69893.1"/>
    <property type="molecule type" value="mRNA"/>
</dbReference>
<dbReference type="CCDS" id="CCDS25908.1"/>
<dbReference type="RefSeq" id="NP_082409.2">
    <property type="nucleotide sequence ID" value="NM_028133.2"/>
</dbReference>
<dbReference type="SMR" id="Q91UZ4"/>
<dbReference type="BioGRID" id="227483">
    <property type="interactions" value="5"/>
</dbReference>
<dbReference type="FunCoup" id="Q91UZ4">
    <property type="interactions" value="1837"/>
</dbReference>
<dbReference type="STRING" id="10090.ENSMUSP00000041874"/>
<dbReference type="PhosphoSitePlus" id="Q91UZ4"/>
<dbReference type="PaxDb" id="10090-ENSMUSP00000041874"/>
<dbReference type="PeptideAtlas" id="Q91UZ4"/>
<dbReference type="ProteomicsDB" id="277804"/>
<dbReference type="DNASU" id="112407"/>
<dbReference type="GeneID" id="112407"/>
<dbReference type="KEGG" id="mmu:112407"/>
<dbReference type="UCSC" id="uc007nns.2">
    <property type="organism name" value="mouse"/>
</dbReference>
<dbReference type="AGR" id="MGI:1932288"/>
<dbReference type="CTD" id="112399"/>
<dbReference type="MGI" id="MGI:1932288">
    <property type="gene designation" value="Egln3"/>
</dbReference>
<dbReference type="eggNOG" id="KOG3710">
    <property type="taxonomic scope" value="Eukaryota"/>
</dbReference>
<dbReference type="InParanoid" id="Q91UZ4"/>
<dbReference type="OrthoDB" id="76265at2759"/>
<dbReference type="PhylomeDB" id="Q91UZ4"/>
<dbReference type="TreeFam" id="TF314595"/>
<dbReference type="BRENDA" id="1.14.11.29">
    <property type="organism ID" value="3474"/>
</dbReference>
<dbReference type="Reactome" id="R-MMU-1234176">
    <property type="pathway name" value="Oxygen-dependent proline hydroxylation of Hypoxia-inducible Factor Alpha"/>
</dbReference>
<dbReference type="BioGRID-ORCS" id="112407">
    <property type="hits" value="2 hits in 81 CRISPR screens"/>
</dbReference>
<dbReference type="ChiTaRS" id="Egln3">
    <property type="organism name" value="mouse"/>
</dbReference>
<dbReference type="PRO" id="PR:Q91UZ4"/>
<dbReference type="Proteomes" id="UP000000589">
    <property type="component" value="Unplaced"/>
</dbReference>
<dbReference type="RNAct" id="Q91UZ4">
    <property type="molecule type" value="protein"/>
</dbReference>
<dbReference type="GO" id="GO:0005737">
    <property type="term" value="C:cytoplasm"/>
    <property type="evidence" value="ECO:0000250"/>
    <property type="project" value="UniProtKB"/>
</dbReference>
<dbReference type="GO" id="GO:0005634">
    <property type="term" value="C:nucleus"/>
    <property type="evidence" value="ECO:0000250"/>
    <property type="project" value="UniProtKB"/>
</dbReference>
<dbReference type="GO" id="GO:0016706">
    <property type="term" value="F:2-oxoglutarate-dependent dioxygenase activity"/>
    <property type="evidence" value="ECO:0000266"/>
    <property type="project" value="MGI"/>
</dbReference>
<dbReference type="GO" id="GO:0160082">
    <property type="term" value="F:hypoxia-inducible factor-proline dioxygenase activity"/>
    <property type="evidence" value="ECO:0007669"/>
    <property type="project" value="UniProtKB-EC"/>
</dbReference>
<dbReference type="GO" id="GO:0005506">
    <property type="term" value="F:iron ion binding"/>
    <property type="evidence" value="ECO:0007669"/>
    <property type="project" value="InterPro"/>
</dbReference>
<dbReference type="GO" id="GO:0031418">
    <property type="term" value="F:L-ascorbic acid binding"/>
    <property type="evidence" value="ECO:0007669"/>
    <property type="project" value="UniProtKB-KW"/>
</dbReference>
<dbReference type="GO" id="GO:0031543">
    <property type="term" value="F:peptidyl-proline dioxygenase activity"/>
    <property type="evidence" value="ECO:0000314"/>
    <property type="project" value="MGI"/>
</dbReference>
<dbReference type="GO" id="GO:0006915">
    <property type="term" value="P:apoptotic process"/>
    <property type="evidence" value="ECO:0007669"/>
    <property type="project" value="UniProtKB-KW"/>
</dbReference>
<dbReference type="GO" id="GO:1990830">
    <property type="term" value="P:cellular response to leukemia inhibitory factor"/>
    <property type="evidence" value="ECO:0000270"/>
    <property type="project" value="MGI"/>
</dbReference>
<dbReference type="GO" id="GO:0006974">
    <property type="term" value="P:DNA damage response"/>
    <property type="evidence" value="ECO:0007669"/>
    <property type="project" value="UniProtKB-KW"/>
</dbReference>
<dbReference type="GO" id="GO:0018126">
    <property type="term" value="P:protein hydroxylation"/>
    <property type="evidence" value="ECO:0000250"/>
    <property type="project" value="UniProtKB"/>
</dbReference>
<dbReference type="GO" id="GO:0042127">
    <property type="term" value="P:regulation of cell population proliferation"/>
    <property type="evidence" value="ECO:0000315"/>
    <property type="project" value="UniProtKB"/>
</dbReference>
<dbReference type="GO" id="GO:0043523">
    <property type="term" value="P:regulation of neuron apoptotic process"/>
    <property type="evidence" value="ECO:0000315"/>
    <property type="project" value="UniProtKB"/>
</dbReference>
<dbReference type="FunFam" id="2.60.120.620:FF:000005">
    <property type="entry name" value="Egl nine homolog 1"/>
    <property type="match status" value="1"/>
</dbReference>
<dbReference type="Gene3D" id="2.60.120.620">
    <property type="entry name" value="q2cbj1_9rhob like domain"/>
    <property type="match status" value="1"/>
</dbReference>
<dbReference type="InterPro" id="IPR051559">
    <property type="entry name" value="HIF_prolyl_hydroxylases"/>
</dbReference>
<dbReference type="InterPro" id="IPR005123">
    <property type="entry name" value="Oxoglu/Fe-dep_dioxygenase_dom"/>
</dbReference>
<dbReference type="InterPro" id="IPR006620">
    <property type="entry name" value="Pro_4_hyd_alph"/>
</dbReference>
<dbReference type="InterPro" id="IPR044862">
    <property type="entry name" value="Pro_4_hyd_alph_FE2OG_OXY"/>
</dbReference>
<dbReference type="PANTHER" id="PTHR12907">
    <property type="entry name" value="EGL NINE HOMOLOG-RELATED"/>
    <property type="match status" value="1"/>
</dbReference>
<dbReference type="PANTHER" id="PTHR12907:SF28">
    <property type="entry name" value="PROLYL HYDROXYLASE EGLN3"/>
    <property type="match status" value="1"/>
</dbReference>
<dbReference type="Pfam" id="PF13640">
    <property type="entry name" value="2OG-FeII_Oxy_3"/>
    <property type="match status" value="1"/>
</dbReference>
<dbReference type="SMART" id="SM00702">
    <property type="entry name" value="P4Hc"/>
    <property type="match status" value="1"/>
</dbReference>
<dbReference type="PROSITE" id="PS51471">
    <property type="entry name" value="FE2OG_OXY"/>
    <property type="match status" value="1"/>
</dbReference>
<name>EGLN3_MOUSE</name>
<proteinExistence type="evidence at protein level"/>